<gene>
    <name evidence="17" type="primary">FREM1</name>
    <name type="synonym">C9orf143</name>
    <name type="synonym">C9orf145</name>
    <name type="synonym">C9orf154</name>
</gene>
<reference key="1">
    <citation type="journal article" date="2005" name="Exp. Cell Res.">
        <title>Identification of a novel cell-adhesive protein spatiotemporally expressed in the basement membrane of mouse developing hair follicle.</title>
        <authorList>
            <person name="Kiyozumi D."/>
            <person name="Osada A."/>
            <person name="Sugimoto N."/>
            <person name="Weber C.N."/>
            <person name="Ono Y."/>
            <person name="Imai T."/>
            <person name="Okada A."/>
            <person name="Sekiguchi K."/>
        </authorList>
    </citation>
    <scope>NUCLEOTIDE SEQUENCE [MRNA] (ISOFORM 1)</scope>
    <scope>VARIANTS LEU-439; VAL-863 AND PRO-2143</scope>
</reference>
<reference key="2">
    <citation type="journal article" date="2004" name="Nat. Genet.">
        <title>Complete sequencing and characterization of 21,243 full-length human cDNAs.</title>
        <authorList>
            <person name="Ota T."/>
            <person name="Suzuki Y."/>
            <person name="Nishikawa T."/>
            <person name="Otsuki T."/>
            <person name="Sugiyama T."/>
            <person name="Irie R."/>
            <person name="Wakamatsu A."/>
            <person name="Hayashi K."/>
            <person name="Sato H."/>
            <person name="Nagai K."/>
            <person name="Kimura K."/>
            <person name="Makita H."/>
            <person name="Sekine M."/>
            <person name="Obayashi M."/>
            <person name="Nishi T."/>
            <person name="Shibahara T."/>
            <person name="Tanaka T."/>
            <person name="Ishii S."/>
            <person name="Yamamoto J."/>
            <person name="Saito K."/>
            <person name="Kawai Y."/>
            <person name="Isono Y."/>
            <person name="Nakamura Y."/>
            <person name="Nagahari K."/>
            <person name="Murakami K."/>
            <person name="Yasuda T."/>
            <person name="Iwayanagi T."/>
            <person name="Wagatsuma M."/>
            <person name="Shiratori A."/>
            <person name="Sudo H."/>
            <person name="Hosoiri T."/>
            <person name="Kaku Y."/>
            <person name="Kodaira H."/>
            <person name="Kondo H."/>
            <person name="Sugawara M."/>
            <person name="Takahashi M."/>
            <person name="Kanda K."/>
            <person name="Yokoi T."/>
            <person name="Furuya T."/>
            <person name="Kikkawa E."/>
            <person name="Omura Y."/>
            <person name="Abe K."/>
            <person name="Kamihara K."/>
            <person name="Katsuta N."/>
            <person name="Sato K."/>
            <person name="Tanikawa M."/>
            <person name="Yamazaki M."/>
            <person name="Ninomiya K."/>
            <person name="Ishibashi T."/>
            <person name="Yamashita H."/>
            <person name="Murakawa K."/>
            <person name="Fujimori K."/>
            <person name="Tanai H."/>
            <person name="Kimata M."/>
            <person name="Watanabe M."/>
            <person name="Hiraoka S."/>
            <person name="Chiba Y."/>
            <person name="Ishida S."/>
            <person name="Ono Y."/>
            <person name="Takiguchi S."/>
            <person name="Watanabe S."/>
            <person name="Yosida M."/>
            <person name="Hotuta T."/>
            <person name="Kusano J."/>
            <person name="Kanehori K."/>
            <person name="Takahashi-Fujii A."/>
            <person name="Hara H."/>
            <person name="Tanase T.-O."/>
            <person name="Nomura Y."/>
            <person name="Togiya S."/>
            <person name="Komai F."/>
            <person name="Hara R."/>
            <person name="Takeuchi K."/>
            <person name="Arita M."/>
            <person name="Imose N."/>
            <person name="Musashino K."/>
            <person name="Yuuki H."/>
            <person name="Oshima A."/>
            <person name="Sasaki N."/>
            <person name="Aotsuka S."/>
            <person name="Yoshikawa Y."/>
            <person name="Matsunawa H."/>
            <person name="Ichihara T."/>
            <person name="Shiohata N."/>
            <person name="Sano S."/>
            <person name="Moriya S."/>
            <person name="Momiyama H."/>
            <person name="Satoh N."/>
            <person name="Takami S."/>
            <person name="Terashima Y."/>
            <person name="Suzuki O."/>
            <person name="Nakagawa S."/>
            <person name="Senoh A."/>
            <person name="Mizoguchi H."/>
            <person name="Goto Y."/>
            <person name="Shimizu F."/>
            <person name="Wakebe H."/>
            <person name="Hishigaki H."/>
            <person name="Watanabe T."/>
            <person name="Sugiyama A."/>
            <person name="Takemoto M."/>
            <person name="Kawakami B."/>
            <person name="Yamazaki M."/>
            <person name="Watanabe K."/>
            <person name="Kumagai A."/>
            <person name="Itakura S."/>
            <person name="Fukuzumi Y."/>
            <person name="Fujimori Y."/>
            <person name="Komiyama M."/>
            <person name="Tashiro H."/>
            <person name="Tanigami A."/>
            <person name="Fujiwara T."/>
            <person name="Ono T."/>
            <person name="Yamada K."/>
            <person name="Fujii Y."/>
            <person name="Ozaki K."/>
            <person name="Hirao M."/>
            <person name="Ohmori Y."/>
            <person name="Kawabata A."/>
            <person name="Hikiji T."/>
            <person name="Kobatake N."/>
            <person name="Inagaki H."/>
            <person name="Ikema Y."/>
            <person name="Okamoto S."/>
            <person name="Okitani R."/>
            <person name="Kawakami T."/>
            <person name="Noguchi S."/>
            <person name="Itoh T."/>
            <person name="Shigeta K."/>
            <person name="Senba T."/>
            <person name="Matsumura K."/>
            <person name="Nakajima Y."/>
            <person name="Mizuno T."/>
            <person name="Morinaga M."/>
            <person name="Sasaki M."/>
            <person name="Togashi T."/>
            <person name="Oyama M."/>
            <person name="Hata H."/>
            <person name="Watanabe M."/>
            <person name="Komatsu T."/>
            <person name="Mizushima-Sugano J."/>
            <person name="Satoh T."/>
            <person name="Shirai Y."/>
            <person name="Takahashi Y."/>
            <person name="Nakagawa K."/>
            <person name="Okumura K."/>
            <person name="Nagase T."/>
            <person name="Nomura N."/>
            <person name="Kikuchi H."/>
            <person name="Masuho Y."/>
            <person name="Yamashita R."/>
            <person name="Nakai K."/>
            <person name="Yada T."/>
            <person name="Nakamura Y."/>
            <person name="Ohara O."/>
            <person name="Isogai T."/>
            <person name="Sugano S."/>
        </authorList>
    </citation>
    <scope>NUCLEOTIDE SEQUENCE [LARGE SCALE MRNA] (ISOFORM 4)</scope>
    <source>
        <tissue>Testis</tissue>
    </source>
</reference>
<reference key="3">
    <citation type="journal article" date="2007" name="BMC Genomics">
        <title>The full-ORF clone resource of the German cDNA consortium.</title>
        <authorList>
            <person name="Bechtel S."/>
            <person name="Rosenfelder H."/>
            <person name="Duda A."/>
            <person name="Schmidt C.P."/>
            <person name="Ernst U."/>
            <person name="Wellenreuther R."/>
            <person name="Mehrle A."/>
            <person name="Schuster C."/>
            <person name="Bahr A."/>
            <person name="Bloecker H."/>
            <person name="Heubner D."/>
            <person name="Hoerlein A."/>
            <person name="Michel G."/>
            <person name="Wedler H."/>
            <person name="Koehrer K."/>
            <person name="Ottenwaelder B."/>
            <person name="Poustka A."/>
            <person name="Wiemann S."/>
            <person name="Schupp I."/>
        </authorList>
    </citation>
    <scope>NUCLEOTIDE SEQUENCE [LARGE SCALE MRNA] (ISOFORM 3)</scope>
    <source>
        <tissue>Fetal kidney</tissue>
    </source>
</reference>
<reference key="4">
    <citation type="journal article" date="2004" name="Nature">
        <title>DNA sequence and analysis of human chromosome 9.</title>
        <authorList>
            <person name="Humphray S.J."/>
            <person name="Oliver K."/>
            <person name="Hunt A.R."/>
            <person name="Plumb R.W."/>
            <person name="Loveland J.E."/>
            <person name="Howe K.L."/>
            <person name="Andrews T.D."/>
            <person name="Searle S."/>
            <person name="Hunt S.E."/>
            <person name="Scott C.E."/>
            <person name="Jones M.C."/>
            <person name="Ainscough R."/>
            <person name="Almeida J.P."/>
            <person name="Ambrose K.D."/>
            <person name="Ashwell R.I.S."/>
            <person name="Babbage A.K."/>
            <person name="Babbage S."/>
            <person name="Bagguley C.L."/>
            <person name="Bailey J."/>
            <person name="Banerjee R."/>
            <person name="Barker D.J."/>
            <person name="Barlow K.F."/>
            <person name="Bates K."/>
            <person name="Beasley H."/>
            <person name="Beasley O."/>
            <person name="Bird C.P."/>
            <person name="Bray-Allen S."/>
            <person name="Brown A.J."/>
            <person name="Brown J.Y."/>
            <person name="Burford D."/>
            <person name="Burrill W."/>
            <person name="Burton J."/>
            <person name="Carder C."/>
            <person name="Carter N.P."/>
            <person name="Chapman J.C."/>
            <person name="Chen Y."/>
            <person name="Clarke G."/>
            <person name="Clark S.Y."/>
            <person name="Clee C.M."/>
            <person name="Clegg S."/>
            <person name="Collier R.E."/>
            <person name="Corby N."/>
            <person name="Crosier M."/>
            <person name="Cummings A.T."/>
            <person name="Davies J."/>
            <person name="Dhami P."/>
            <person name="Dunn M."/>
            <person name="Dutta I."/>
            <person name="Dyer L.W."/>
            <person name="Earthrowl M.E."/>
            <person name="Faulkner L."/>
            <person name="Fleming C.J."/>
            <person name="Frankish A."/>
            <person name="Frankland J.A."/>
            <person name="French L."/>
            <person name="Fricker D.G."/>
            <person name="Garner P."/>
            <person name="Garnett J."/>
            <person name="Ghori J."/>
            <person name="Gilbert J.G.R."/>
            <person name="Glison C."/>
            <person name="Grafham D.V."/>
            <person name="Gribble S."/>
            <person name="Griffiths C."/>
            <person name="Griffiths-Jones S."/>
            <person name="Grocock R."/>
            <person name="Guy J."/>
            <person name="Hall R.E."/>
            <person name="Hammond S."/>
            <person name="Harley J.L."/>
            <person name="Harrison E.S.I."/>
            <person name="Hart E.A."/>
            <person name="Heath P.D."/>
            <person name="Henderson C.D."/>
            <person name="Hopkins B.L."/>
            <person name="Howard P.J."/>
            <person name="Howden P.J."/>
            <person name="Huckle E."/>
            <person name="Johnson C."/>
            <person name="Johnson D."/>
            <person name="Joy A.A."/>
            <person name="Kay M."/>
            <person name="Keenan S."/>
            <person name="Kershaw J.K."/>
            <person name="Kimberley A.M."/>
            <person name="King A."/>
            <person name="Knights A."/>
            <person name="Laird G.K."/>
            <person name="Langford C."/>
            <person name="Lawlor S."/>
            <person name="Leongamornlert D.A."/>
            <person name="Leversha M."/>
            <person name="Lloyd C."/>
            <person name="Lloyd D.M."/>
            <person name="Lovell J."/>
            <person name="Martin S."/>
            <person name="Mashreghi-Mohammadi M."/>
            <person name="Matthews L."/>
            <person name="McLaren S."/>
            <person name="McLay K.E."/>
            <person name="McMurray A."/>
            <person name="Milne S."/>
            <person name="Nickerson T."/>
            <person name="Nisbett J."/>
            <person name="Nordsiek G."/>
            <person name="Pearce A.V."/>
            <person name="Peck A.I."/>
            <person name="Porter K.M."/>
            <person name="Pandian R."/>
            <person name="Pelan S."/>
            <person name="Phillimore B."/>
            <person name="Povey S."/>
            <person name="Ramsey Y."/>
            <person name="Rand V."/>
            <person name="Scharfe M."/>
            <person name="Sehra H.K."/>
            <person name="Shownkeen R."/>
            <person name="Sims S.K."/>
            <person name="Skuce C.D."/>
            <person name="Smith M."/>
            <person name="Steward C.A."/>
            <person name="Swarbreck D."/>
            <person name="Sycamore N."/>
            <person name="Tester J."/>
            <person name="Thorpe A."/>
            <person name="Tracey A."/>
            <person name="Tromans A."/>
            <person name="Thomas D.W."/>
            <person name="Wall M."/>
            <person name="Wallis J.M."/>
            <person name="West A.P."/>
            <person name="Whitehead S.L."/>
            <person name="Willey D.L."/>
            <person name="Williams S.A."/>
            <person name="Wilming L."/>
            <person name="Wray P.W."/>
            <person name="Young L."/>
            <person name="Ashurst J.L."/>
            <person name="Coulson A."/>
            <person name="Blocker H."/>
            <person name="Durbin R.M."/>
            <person name="Sulston J.E."/>
            <person name="Hubbard T."/>
            <person name="Jackson M.J."/>
            <person name="Bentley D.R."/>
            <person name="Beck S."/>
            <person name="Rogers J."/>
            <person name="Dunham I."/>
        </authorList>
    </citation>
    <scope>NUCLEOTIDE SEQUENCE [LARGE SCALE GENOMIC DNA]</scope>
</reference>
<reference key="5">
    <citation type="journal article" date="2004" name="Genome Res.">
        <title>The status, quality, and expansion of the NIH full-length cDNA project: the Mammalian Gene Collection (MGC).</title>
        <authorList>
            <consortium name="The MGC Project Team"/>
        </authorList>
    </citation>
    <scope>NUCLEOTIDE SEQUENCE [LARGE SCALE MRNA] (ISOFORM 2)</scope>
    <scope>VARIANTS PRO-2143 AND GLY-2174</scope>
    <source>
        <tissue>Testis</tissue>
    </source>
</reference>
<reference key="6">
    <citation type="journal article" date="2018" name="Hum. Mol. Genet.">
        <title>A homozygous mutation p.Arg2167Trp in FREM2 causes isolated cryptophthalmos.</title>
        <authorList>
            <person name="Yu Q."/>
            <person name="Lin B."/>
            <person name="Xie S."/>
            <person name="Gao S."/>
            <person name="Li W."/>
            <person name="Liu Y."/>
            <person name="Wang H."/>
            <person name="Huang D."/>
            <person name="Xie Z."/>
        </authorList>
    </citation>
    <scope>INTERACTION WITH FREM2</scope>
</reference>
<reference key="7">
    <citation type="journal article" date="2009" name="Am. J. Hum. Genet.">
        <title>FREM1 mutations cause bifid nose, renal agenesis, and anorectal malformations syndrome.</title>
        <authorList>
            <person name="Alazami A.M."/>
            <person name="Shaheen R."/>
            <person name="Alzahrani F."/>
            <person name="Snape K."/>
            <person name="Saggar A."/>
            <person name="Brinkmann B."/>
            <person name="Bavi P."/>
            <person name="Al-Gazali L.I."/>
            <person name="Alkuraya F.S."/>
        </authorList>
    </citation>
    <scope>VARIANTS BNAR TRP-649 AND SER-1440</scope>
</reference>
<reference key="8">
    <citation type="journal article" date="2011" name="J. Med. Genet.">
        <title>Manitoba-oculo-tricho-anal (MOTA) syndrome is caused by mutations in FREM1.</title>
        <authorList>
            <person name="Slavotinek A.M."/>
            <person name="Baranzini S.E."/>
            <person name="Schanze D."/>
            <person name="Labelle-Dumais C."/>
            <person name="Short K.M."/>
            <person name="Chao R."/>
            <person name="Yahyavi M."/>
            <person name="Bijlsma E.K."/>
            <person name="Chu C."/>
            <person name="Musone S."/>
            <person name="Wheatley A."/>
            <person name="Kwok P.Y."/>
            <person name="Marles S."/>
            <person name="Fryns J.P."/>
            <person name="Maga A.M."/>
            <person name="Hassan M.G."/>
            <person name="Gould D.B."/>
            <person name="Madireddy L."/>
            <person name="Li C."/>
            <person name="Cox T.C."/>
            <person name="Smyth I."/>
            <person name="Chudley A.E."/>
            <person name="Zenker M."/>
        </authorList>
    </citation>
    <scope>VARIANTS MOTA ARG-1324 AND ILE-2091</scope>
</reference>
<reference key="9">
    <citation type="journal article" date="2011" name="PLoS Genet.">
        <title>Heterozygous mutations of FREM1 are associated with an increased risk of isolated metopic craniosynostosis in humans and mice.</title>
        <authorList>
            <person name="Vissers L.E.L.M."/>
            <person name="Cox T.C."/>
            <person name="Maga A.M."/>
            <person name="Short K.M."/>
            <person name="Wiradjaja F."/>
            <person name="Janssen I.M."/>
            <person name="Jehee F."/>
            <person name="Bertola D."/>
            <person name="Liu J."/>
            <person name="Yagnik G."/>
            <person name="Sekiguchi K."/>
            <person name="Kiyozumi D."/>
            <person name="van Bokhoven H."/>
            <person name="Marcelis C."/>
            <person name="Cunningham M.L."/>
            <person name="Anderson P.J."/>
            <person name="Boyadjiev S.A."/>
            <person name="Passos-Bueno M.R."/>
            <person name="Veltman J.A."/>
            <person name="Smyth I."/>
            <person name="Buckley M.F."/>
            <person name="Roscioli T."/>
        </authorList>
    </citation>
    <scope>VARIANTS TRIGNO2 GLN-498 AND VAL-1500</scope>
</reference>
<reference key="10">
    <citation type="journal article" date="2017" name="Eur. J. Med. Genet.">
        <title>Novel FREM1 mutations in a patient with MOTA syndrome: Clinical findings, mutation update and review of FREM1-related disorders literature.</title>
        <authorList>
            <person name="Chacon-Camacho O.F."/>
            <person name="Zenker M."/>
            <person name="Schanze D."/>
            <person name="Ledesma-Gil J."/>
            <person name="Zenteno J.C."/>
        </authorList>
    </citation>
    <scope>VARIANT MOTA GLY-102</scope>
</reference>
<feature type="signal peptide" evidence="3">
    <location>
        <begin position="1"/>
        <end position="21"/>
    </location>
</feature>
<feature type="chain" id="PRO_0000010122" description="FRAS1-related extracellular matrix protein 1">
    <location>
        <begin position="22"/>
        <end position="2179"/>
    </location>
</feature>
<feature type="repeat" description="CSPG 1" evidence="5">
    <location>
        <begin position="296"/>
        <end position="390"/>
    </location>
</feature>
<feature type="repeat" description="CSPG 2" evidence="5">
    <location>
        <begin position="413"/>
        <end position="500"/>
    </location>
</feature>
<feature type="repeat" description="CSPG 3" evidence="5">
    <location>
        <begin position="521"/>
        <end position="615"/>
    </location>
</feature>
<feature type="repeat" description="CSPG 4" evidence="5">
    <location>
        <begin position="642"/>
        <end position="754"/>
    </location>
</feature>
<feature type="repeat" description="CSPG 5" evidence="5">
    <location>
        <begin position="776"/>
        <end position="867"/>
    </location>
</feature>
<feature type="repeat" description="CSPG 6" evidence="5">
    <location>
        <begin position="887"/>
        <end position="982"/>
    </location>
</feature>
<feature type="repeat" description="CSPG 7" evidence="5">
    <location>
        <begin position="1024"/>
        <end position="1126"/>
    </location>
</feature>
<feature type="repeat" description="CSPG 8" evidence="5">
    <location>
        <begin position="1147"/>
        <end position="1254"/>
    </location>
</feature>
<feature type="repeat" description="CSPG 9" evidence="5">
    <location>
        <begin position="1275"/>
        <end position="1372"/>
    </location>
</feature>
<feature type="repeat" description="CSPG 10" evidence="5">
    <location>
        <begin position="1393"/>
        <end position="1485"/>
    </location>
</feature>
<feature type="repeat" description="CSPG 11" evidence="5">
    <location>
        <begin position="1506"/>
        <end position="1596"/>
    </location>
</feature>
<feature type="repeat" description="CSPG 12" evidence="5">
    <location>
        <begin position="1628"/>
        <end position="1724"/>
    </location>
</feature>
<feature type="domain" description="Calx-beta">
    <location>
        <begin position="1731"/>
        <end position="1830"/>
    </location>
</feature>
<feature type="domain" description="C-type lectin" evidence="4">
    <location>
        <begin position="2060"/>
        <end position="2174"/>
    </location>
</feature>
<feature type="short sequence motif" description="Cell attachment site" evidence="1">
    <location>
        <begin position="199"/>
        <end position="201"/>
    </location>
</feature>
<feature type="short sequence motif" description="Cell attachment site" evidence="3">
    <location>
        <begin position="1907"/>
        <end position="1909"/>
    </location>
</feature>
<feature type="glycosylation site" description="N-linked (GlcNAc...) asparagine" evidence="3">
    <location>
        <position position="335"/>
    </location>
</feature>
<feature type="glycosylation site" description="N-linked (GlcNAc...) asparagine" evidence="3">
    <location>
        <position position="560"/>
    </location>
</feature>
<feature type="glycosylation site" description="N-linked (GlcNAc...) asparagine" evidence="3">
    <location>
        <position position="622"/>
    </location>
</feature>
<feature type="glycosylation site" description="N-linked (GlcNAc...) asparagine" evidence="3">
    <location>
        <position position="1014"/>
    </location>
</feature>
<feature type="glycosylation site" description="N-linked (GlcNAc...) asparagine" evidence="3">
    <location>
        <position position="1566"/>
    </location>
</feature>
<feature type="disulfide bond" evidence="4">
    <location>
        <begin position="2151"/>
        <end position="2165"/>
    </location>
</feature>
<feature type="splice variant" id="VSP_015025" description="In isoform 3." evidence="15">
    <location>
        <begin position="1"/>
        <end position="1803"/>
    </location>
</feature>
<feature type="splice variant" id="VSP_015026" description="In isoform 4." evidence="13">
    <location>
        <begin position="1"/>
        <end position="1587"/>
    </location>
</feature>
<feature type="splice variant" id="VSP_047283" description="In isoform 2." evidence="14">
    <location>
        <begin position="1"/>
        <end position="1464"/>
    </location>
</feature>
<feature type="splice variant" id="VSP_047284" description="In isoform 2." evidence="14">
    <original>VCYVHKSKVTVSSDRF</original>
    <variation>MVTQESMLKAALPLFT</variation>
    <location>
        <begin position="1465"/>
        <end position="1480"/>
    </location>
</feature>
<feature type="splice variant" id="VSP_015029" description="In isoform 4." evidence="13">
    <original>TDCFTFMATDGTNQGFIVNGRVWEEPVLFTIQ</original>
    <variation>MLDESLAVRRSKKCKEMIMHWEKKEDIDIVNT</variation>
    <location>
        <begin position="1588"/>
        <end position="1619"/>
    </location>
</feature>
<feature type="splice variant" id="VSP_015030" description="In isoform 4." evidence="13">
    <original>MSTKMW</original>
    <variation>SSILCL</variation>
    <location>
        <begin position="1804"/>
        <end position="1809"/>
    </location>
</feature>
<feature type="splice variant" id="VSP_015031" description="In isoform 4." evidence="13">
    <location>
        <begin position="1810"/>
        <end position="2179"/>
    </location>
</feature>
<feature type="sequence variant" id="VAR_078339" description="In MOTA; uncertain significance; dbSNP:rs1338652795." evidence="11">
    <original>D</original>
    <variation>G</variation>
    <location>
        <position position="102"/>
    </location>
</feature>
<feature type="sequence variant" id="VAR_047317" description="In dbSNP:rs2779500." evidence="7">
    <original>V</original>
    <variation>L</variation>
    <location>
        <position position="439"/>
    </location>
</feature>
<feature type="sequence variant" id="VAR_067916" description="In TRIGNO2; dbSNP:rs184394424." evidence="10">
    <original>R</original>
    <variation>Q</variation>
    <location>
        <position position="498"/>
    </location>
</feature>
<feature type="sequence variant" id="VAR_047318" description="In dbSNP:rs1353223.">
    <original>I</original>
    <variation>V</variation>
    <location>
        <position position="499"/>
    </location>
</feature>
<feature type="sequence variant" id="VAR_063422" description="In BNAR; dbSNP:rs121912609." evidence="8">
    <original>R</original>
    <variation>W</variation>
    <location>
        <position position="649"/>
    </location>
</feature>
<feature type="sequence variant" id="VAR_047319" description="In dbSNP:rs7023244.">
    <original>S</original>
    <variation>Y</variation>
    <location>
        <position position="803"/>
    </location>
</feature>
<feature type="sequence variant" id="VAR_047320" description="In dbSNP:rs7041710." evidence="7">
    <original>L</original>
    <variation>V</variation>
    <location>
        <position position="863"/>
    </location>
</feature>
<feature type="sequence variant" id="VAR_047321" description="In dbSNP:rs16932300.">
    <original>S</original>
    <variation>R</variation>
    <location>
        <position position="1202"/>
    </location>
</feature>
<feature type="sequence variant" id="VAR_047322" description="In dbSNP:rs7025814.">
    <original>D</original>
    <variation>E</variation>
    <location>
        <position position="1273"/>
    </location>
</feature>
<feature type="sequence variant" id="VAR_066412" description="In MOTA; dbSNP:rs281875281." evidence="9">
    <original>L</original>
    <variation>R</variation>
    <location>
        <position position="1324"/>
    </location>
</feature>
<feature type="sequence variant" id="VAR_063423" description="In BNAR; dbSNP:rs121912610." evidence="8">
    <original>G</original>
    <variation>S</variation>
    <location>
        <position position="1440"/>
    </location>
</feature>
<feature type="sequence variant" id="VAR_067917" description="In TRIGNO2; dbSNP:rs281875280." evidence="10">
    <original>E</original>
    <variation>V</variation>
    <location>
        <position position="1500"/>
    </location>
</feature>
<feature type="sequence variant" id="VAR_047323" description="In dbSNP:rs10961700.">
    <original>V</original>
    <variation>M</variation>
    <location>
        <position position="1502"/>
    </location>
</feature>
<feature type="sequence variant" id="VAR_047324" description="In dbSNP:rs2101770.">
    <original>N</original>
    <variation>I</variation>
    <location>
        <position position="1576"/>
    </location>
</feature>
<feature type="sequence variant" id="VAR_066413" description="In MOTA; dbSNP:rs281875282." evidence="9">
    <original>V</original>
    <variation>I</variation>
    <location>
        <position position="2091"/>
    </location>
</feature>
<feature type="sequence variant" id="VAR_047325" description="In dbSNP:rs10961689." evidence="6 7">
    <original>Q</original>
    <variation>P</variation>
    <location>
        <position position="2143"/>
    </location>
</feature>
<feature type="sequence variant" id="VAR_047326" description="In dbSNP:rs17856912." evidence="6">
    <original>V</original>
    <variation>G</variation>
    <location>
        <position position="2174"/>
    </location>
</feature>
<feature type="sequence conflict" description="In Ref. 5; AAH31064." evidence="16" ref="5">
    <original>I</original>
    <variation>N</variation>
    <location>
        <position position="1735"/>
    </location>
</feature>
<feature type="sequence conflict" description="In Ref. 3; CAE46048." evidence="16" ref="3">
    <original>S</original>
    <variation>A</variation>
    <location>
        <position position="1861"/>
    </location>
</feature>
<sequence>MNSLSWGAANAVLLLLLLAWASPTFISINRGVRVMKGHSAFLSGDDLKFAIPKEKDACKVEVVMNEPITQRVGKLTPQVFDCHFLPNEVKYVHNGCPILDEDTVKLRLYRFTERDTFIETFILWVYLLEPDCNIIHMSNNVLEVPEFNGLSQAIDKNLLRFDYDRMASLECTVSLDTARTRLPAHGQMVLGEPRPEEPRGDQPHSFFPESQLRAKLKCPGGSCTPGLKKIGSLKVSCEEFLLMGLRYQHLDPPSPNIDYISIQLDLTDTRSKIVYKSESAWLPVYIRAGIPNQIPKAAFMAVFILEVDQFILTSLTTSVLDCEEDETPKPLLVFNITKAPLQGYVTHLLDHTRPISSFTWKDLSDMQIAYQPPNSSHSERRHDEVELEVYDFFFERSAPMTVHISIRTADTNAPRVSWNTGLSLLEGQSRAITWEQFQVVDNDDIGAVRLVTVGGLQHGWLTLRGGKGFLFTVADLQAGVVRYHHDDSDSTKDFVVFRIFDGHHSIRHKFPINVLPKDDSPPFLITNVVIELEEGQTILIQGSMLRASDVDASDDYIFFNITKPPQAGEIMKKPGPGLIGYPVHGFLQRDLFNGIIYYRHFGGEIFEDSFQFVLWDSHEPPNLSVPQVATIHITPVDDQLPKEAPGVSRHLVVKETEVAYITKKQLHFIDSESYDRELVYTITTPPFFSFSHRHLDAGKLFMVDSIPKVVKNPTALELRSFTQHAVNYMKVAYMPPMQDIGPHCRDVQFTFSVSNQHGGTLHGICFNITILPVDNQVPEAFTNPLKVTEGGQSIISTEHILISDADTKLDNIDLSLRELPLHGRVELNGFPLNSGGTFSWGDLHTLKVRYQHDGTEVLQDDLLLEVTDGTNSAEFVLHVEVFPVNDEPPVLKADLMPVMNCSEGGEVVITSEYIFATDVDSDNLKLMFVIAREPQHGVVRRAGVTVDQFSQRDVISEAVTYKHTGGEIGLMPCFDTITLVVSDGEAGPFVNGCCYNGPNPSVPLHASFPVYDLNITVYPVDNQPPSIAIGPVFVVDEGCSTALTVNHLSATDPDTAADDLEFVLVSPPQFGYLENILPSVGFEKSNIGISIDSFQWKDMNAFHINYVQSRHLRIEPTADQFTVYVTDGKHHSLEIPFSIIINPTNDEAPDFVVQNITVCEGQMKELDSSIISAVDLDIPQDALLFSITQKPRHGLLIDRGFSKDFSENKQPANPHQKHAPVHSFSMELLKTGMRLTYMHDDSESLADDFTIQLSDGKHKILKTISVEVIPVNDEKPMLSKKAEIAMNMGETRIISSAILSAIDEDSPREKIYYVFERLPQNGQLQLKIGRDWVPLSPGMKCTQEEVDLNLLRYTHTGAMDSQNQDSFTFYLWDGNNRSPALDCQITIKDMEKGDIVILTKPLVVSKGDRGFLTTTTLLAVDGTDKPEELLYVITSPPRYGQIEYVHYPGVPITNFSQMDVVGQTVCYVHKSKVTVSSDRFRFIISNGLRTEHGVFEITLETVDRALPVVTRNKGLRLAQGAVGLLSPDLLQLTDPDTPAENLTFLLVQLPQHGQLYLWGTGLLQHNFTQQDVDSKNVAYRHSGGDSQTDCFTFMATDGTNQGFIVNGRVWEEPVLFTIQVDQLDKTAPRITLLHSPSQVGLLKNGCYGIYITSRVLKASDPDTEDDQIIFKILQGPKHGHLENTTTGEFIHEKFSQKDLNSKTILYIINPSLEVNSDTVEFQIMDPTGNSATPQILELKWSHIEWSQTEYEVCENVGLLPLEIIRRGYSMDSAFVGIKVNQVSAAVGKDFTVIPSKLIQFDPGMSTKMWNIAITYDGLEEDDEVFEVILNSPVNAVLGTKTKAAVKILDSKGGQCHPSYSSNQSKHSTWEKGIWHLLPPGSSSSTTSGSFHLERRPLPSSMQLAVIRGDTLRGFDSTDLSQRKLRTRGNGKTVRPSSVYRNGTDIIYNYHGIVSLKLEDDSFPTHKRKAKVSIISQPQKTIKVAELPQADKVESTTDSHFPRQDQLPSFPKNCTLELKGLFHFEEGIQKLYQCNGIAWKAWSPQTKDVEDKSCPAGWHQHSGYCHILITEQKGTWNAAAQACREQYLGNLVTVFSRQHMRWLWDIGGRKSFWIGLNDQVHAGHWEWIGGEPVAFTNGRRGPSQRSKLGKSCVLVQRQGKWQTKDCRRAKPHNYVCSRKL</sequence>
<name>FREM1_HUMAN</name>
<organism>
    <name type="scientific">Homo sapiens</name>
    <name type="common">Human</name>
    <dbReference type="NCBI Taxonomy" id="9606"/>
    <lineage>
        <taxon>Eukaryota</taxon>
        <taxon>Metazoa</taxon>
        <taxon>Chordata</taxon>
        <taxon>Craniata</taxon>
        <taxon>Vertebrata</taxon>
        <taxon>Euteleostomi</taxon>
        <taxon>Mammalia</taxon>
        <taxon>Eutheria</taxon>
        <taxon>Euarchontoglires</taxon>
        <taxon>Primates</taxon>
        <taxon>Haplorrhini</taxon>
        <taxon>Catarrhini</taxon>
        <taxon>Hominidae</taxon>
        <taxon>Homo</taxon>
    </lineage>
</organism>
<comment type="function">
    <text evidence="1">Extracellular matrix protein that plays a role in epidermal differentiation and is required for epidermal adhesion during embryonic development.</text>
</comment>
<comment type="subunit">
    <text evidence="12">Interacts with FREM2.</text>
</comment>
<comment type="interaction">
    <interactant intactId="EBI-21460642">
        <id>Q5H8C1</id>
    </interactant>
    <interactant intactId="EBI-20737564">
        <id>Q5SZK8</id>
        <label>FREM2</label>
    </interactant>
    <organismsDiffer>false</organismsDiffer>
    <experiments>2</experiments>
</comment>
<comment type="subcellular location">
    <subcellularLocation>
        <location evidence="2">Secreted</location>
        <location evidence="2">Extracellular space</location>
        <location evidence="2">Extracellular matrix</location>
        <location evidence="2">Basement membrane</location>
    </subcellularLocation>
    <text evidence="2">Localizes at the basement membrane zone of embryonic epidermis and hair follicles.</text>
</comment>
<comment type="alternative products">
    <event type="alternative splicing"/>
    <isoform>
        <id>Q5H8C1-1</id>
        <name>1</name>
        <sequence type="displayed"/>
    </isoform>
    <isoform>
        <id>Q5H8C1-2</id>
        <name>2</name>
        <sequence type="described" ref="VSP_047283 VSP_047284"/>
    </isoform>
    <isoform>
        <id>Q5H8C1-3</id>
        <name>3</name>
        <sequence type="described" ref="VSP_015025"/>
    </isoform>
    <isoform>
        <id>Q5H8C1-4</id>
        <name>4</name>
        <sequence type="described" ref="VSP_015026 VSP_015029 VSP_015030 VSP_015031"/>
    </isoform>
</comment>
<comment type="domain">
    <text evidence="1">The Calx-beta domain binds calcium with high affinity and undergo a major conformational shift upon binding.</text>
</comment>
<comment type="disease" evidence="8">
    <disease id="DI-02627">
        <name>Bifid nose, with or without anorectal and renal anomalies</name>
        <acronym>BNAR</acronym>
        <description>A disease characterized by the presence of a bifid nose usually associated with renal agenesis and anorectal malformations. A bifid nose is a congenital deformity due to failure of the paired nasal processes to fuse to a single midline organ during early gestation.</description>
        <dbReference type="MIM" id="608980"/>
    </disease>
    <text>The disease is caused by variants affecting the gene represented in this entry.</text>
</comment>
<comment type="disease" evidence="9 11">
    <disease id="DI-03215">
        <name>Manitoba oculotrichoanal syndrome</name>
        <acronym>MOTA</acronym>
        <description>A rare condition defined by eyelid colobomas, cryptophthalmos, and anophthalmia/microphthalmia, an aberrant hairline, a bifid or broad nasal tip, and gastrointestinal anomalies such as omphalocele and anal stenosis.</description>
        <dbReference type="MIM" id="248450"/>
    </disease>
    <text>The disease is caused by variants affecting the gene represented in this entry.</text>
</comment>
<comment type="disease" evidence="10">
    <disease id="DI-03386">
        <name>Trigonocephaly 2</name>
        <acronym>TRIGNO2</acronym>
        <description>A keel-shaped deformation of the forehead, caused by premature fusion of the metopic sutures. It results in a triangular shape of the head.</description>
        <dbReference type="MIM" id="614485"/>
    </disease>
    <text>The disease is caused by variants affecting the gene represented in this entry.</text>
</comment>
<comment type="miscellaneous">
    <text>Was termed QBRICK because it contains 12 repeats: 'Q' stands for queen and is taken from the queen being the 12th in a suit of playing card, and 'BRICK' stands for the repeating unit.</text>
</comment>
<comment type="similarity">
    <text evidence="16">Belongs to the FRAS1 family.</text>
</comment>
<comment type="sequence caution" evidence="16">
    <conflict type="erroneous initiation">
        <sequence resource="EMBL-CDS" id="AAH31064"/>
    </conflict>
    <text>Truncated N-terminus.</text>
</comment>
<comment type="online information" name="Mendelian genes FRAS1 related extracellular matrix 1 (FREM1)">
    <link uri="https://databases.lovd.nl/shared/genes/FREM1"/>
    <text>Leiden Open Variation Database (LOVD)</text>
</comment>
<evidence type="ECO:0000250" key="1"/>
<evidence type="ECO:0000250" key="2">
    <source>
        <dbReference type="UniProtKB" id="Q684R7"/>
    </source>
</evidence>
<evidence type="ECO:0000255" key="3"/>
<evidence type="ECO:0000255" key="4">
    <source>
        <dbReference type="PROSITE-ProRule" id="PRU00040"/>
    </source>
</evidence>
<evidence type="ECO:0000255" key="5">
    <source>
        <dbReference type="PROSITE-ProRule" id="PRU01201"/>
    </source>
</evidence>
<evidence type="ECO:0000269" key="6">
    <source>
    </source>
</evidence>
<evidence type="ECO:0000269" key="7">
    <source>
    </source>
</evidence>
<evidence type="ECO:0000269" key="8">
    <source>
    </source>
</evidence>
<evidence type="ECO:0000269" key="9">
    <source>
    </source>
</evidence>
<evidence type="ECO:0000269" key="10">
    <source>
    </source>
</evidence>
<evidence type="ECO:0000269" key="11">
    <source>
    </source>
</evidence>
<evidence type="ECO:0000269" key="12">
    <source>
    </source>
</evidence>
<evidence type="ECO:0000303" key="13">
    <source>
    </source>
</evidence>
<evidence type="ECO:0000303" key="14">
    <source>
    </source>
</evidence>
<evidence type="ECO:0000303" key="15">
    <source>
    </source>
</evidence>
<evidence type="ECO:0000305" key="16"/>
<evidence type="ECO:0000312" key="17">
    <source>
        <dbReference type="HGNC" id="HGNC:23399"/>
    </source>
</evidence>
<protein>
    <recommendedName>
        <fullName evidence="16">FRAS1-related extracellular matrix protein 1</fullName>
    </recommendedName>
    <alternativeName>
        <fullName>Protein QBRICK</fullName>
    </alternativeName>
</protein>
<accession>Q5H8C1</accession>
<accession>B7ZBX4</accession>
<accession>Q5VV00</accession>
<accession>Q5VV01</accession>
<accession>Q6MZI4</accession>
<accession>Q8NEG9</accession>
<accession>Q96LI3</accession>
<proteinExistence type="evidence at protein level"/>
<keyword id="KW-0025">Alternative splicing</keyword>
<keyword id="KW-0084">Basement membrane</keyword>
<keyword id="KW-0106">Calcium</keyword>
<keyword id="KW-0130">Cell adhesion</keyword>
<keyword id="KW-0989">Craniosynostosis</keyword>
<keyword id="KW-0217">Developmental protein</keyword>
<keyword id="KW-0225">Disease variant</keyword>
<keyword id="KW-1015">Disulfide bond</keyword>
<keyword id="KW-0272">Extracellular matrix</keyword>
<keyword id="KW-0325">Glycoprotein</keyword>
<keyword id="KW-0430">Lectin</keyword>
<keyword id="KW-0479">Metal-binding</keyword>
<keyword id="KW-1267">Proteomics identification</keyword>
<keyword id="KW-1185">Reference proteome</keyword>
<keyword id="KW-0677">Repeat</keyword>
<keyword id="KW-0964">Secreted</keyword>
<keyword id="KW-0732">Signal</keyword>
<dbReference type="EMBL" id="AB160987">
    <property type="protein sequence ID" value="BAD89015.1"/>
    <property type="molecule type" value="mRNA"/>
</dbReference>
<dbReference type="EMBL" id="AK058190">
    <property type="protein sequence ID" value="BAB71709.1"/>
    <property type="molecule type" value="mRNA"/>
</dbReference>
<dbReference type="EMBL" id="BX641104">
    <property type="protein sequence ID" value="CAE46048.1"/>
    <property type="molecule type" value="mRNA"/>
</dbReference>
<dbReference type="EMBL" id="AL354672">
    <property type="status" value="NOT_ANNOTATED_CDS"/>
    <property type="molecule type" value="Genomic_DNA"/>
</dbReference>
<dbReference type="EMBL" id="AL390732">
    <property type="status" value="NOT_ANNOTATED_CDS"/>
    <property type="molecule type" value="Genomic_DNA"/>
</dbReference>
<dbReference type="EMBL" id="AL512643">
    <property type="status" value="NOT_ANNOTATED_CDS"/>
    <property type="molecule type" value="Genomic_DNA"/>
</dbReference>
<dbReference type="EMBL" id="BC031064">
    <property type="protein sequence ID" value="AAH31064.2"/>
    <property type="status" value="ALT_INIT"/>
    <property type="molecule type" value="mRNA"/>
</dbReference>
<dbReference type="CCDS" id="CCDS47952.1">
    <molecule id="Q5H8C1-1"/>
</dbReference>
<dbReference type="CCDS" id="CCDS55293.1">
    <molecule id="Q5H8C1-2"/>
</dbReference>
<dbReference type="RefSeq" id="NP_001171175.1">
    <molecule id="Q5H8C1-2"/>
    <property type="nucleotide sequence ID" value="NM_001177704.3"/>
</dbReference>
<dbReference type="RefSeq" id="NP_001356990.1">
    <molecule id="Q5H8C1-2"/>
    <property type="nucleotide sequence ID" value="NM_001370061.2"/>
</dbReference>
<dbReference type="RefSeq" id="NP_001366010.1">
    <molecule id="Q5H8C1-1"/>
    <property type="nucleotide sequence ID" value="NM_001379081.2"/>
</dbReference>
<dbReference type="RefSeq" id="NP_659403.4">
    <molecule id="Q5H8C1-1"/>
    <property type="nucleotide sequence ID" value="NM_144966.5"/>
</dbReference>
<dbReference type="RefSeq" id="XP_005251439.1">
    <property type="nucleotide sequence ID" value="XM_005251382.3"/>
</dbReference>
<dbReference type="RefSeq" id="XP_005251441.1">
    <property type="nucleotide sequence ID" value="XM_005251384.4"/>
</dbReference>
<dbReference type="RefSeq" id="XP_006716792.1">
    <molecule id="Q5H8C1-2"/>
    <property type="nucleotide sequence ID" value="XM_006716729.4"/>
</dbReference>
<dbReference type="RefSeq" id="XP_047278802.1">
    <molecule id="Q5H8C1-1"/>
    <property type="nucleotide sequence ID" value="XM_047422846.1"/>
</dbReference>
<dbReference type="RefSeq" id="XP_047278803.1">
    <molecule id="Q5H8C1-1"/>
    <property type="nucleotide sequence ID" value="XM_047422847.1"/>
</dbReference>
<dbReference type="RefSeq" id="XP_047278804.1">
    <molecule id="Q5H8C1-1"/>
    <property type="nucleotide sequence ID" value="XM_047422848.1"/>
</dbReference>
<dbReference type="BioGRID" id="127670">
    <property type="interactions" value="3"/>
</dbReference>
<dbReference type="CORUM" id="Q5H8C1"/>
<dbReference type="FunCoup" id="Q5H8C1">
    <property type="interactions" value="119"/>
</dbReference>
<dbReference type="IntAct" id="Q5H8C1">
    <property type="interactions" value="1"/>
</dbReference>
<dbReference type="STRING" id="9606.ENSP00000412940"/>
<dbReference type="GlyCosmos" id="Q5H8C1">
    <property type="glycosylation" value="5 sites, No reported glycans"/>
</dbReference>
<dbReference type="GlyGen" id="Q5H8C1">
    <property type="glycosylation" value="7 sites, 3 N-linked glycans (1 site), 1 O-linked glycan (1 site)"/>
</dbReference>
<dbReference type="iPTMnet" id="Q5H8C1"/>
<dbReference type="PhosphoSitePlus" id="Q5H8C1"/>
<dbReference type="BioMuta" id="FREM1"/>
<dbReference type="DMDM" id="215274141"/>
<dbReference type="jPOST" id="Q5H8C1"/>
<dbReference type="MassIVE" id="Q5H8C1"/>
<dbReference type="PaxDb" id="9606-ENSP00000412940"/>
<dbReference type="PeptideAtlas" id="Q5H8C1"/>
<dbReference type="ProteomicsDB" id="62849">
    <molecule id="Q5H8C1-1"/>
</dbReference>
<dbReference type="ProteomicsDB" id="62850">
    <molecule id="Q5H8C1-2"/>
</dbReference>
<dbReference type="ProteomicsDB" id="62851">
    <molecule id="Q5H8C1-3"/>
</dbReference>
<dbReference type="ProteomicsDB" id="62852">
    <molecule id="Q5H8C1-4"/>
</dbReference>
<dbReference type="ProteomicsDB" id="7166"/>
<dbReference type="Antibodypedia" id="42751">
    <property type="antibodies" value="89 antibodies from 24 providers"/>
</dbReference>
<dbReference type="DNASU" id="158326"/>
<dbReference type="Ensembl" id="ENST00000380880.4">
    <molecule id="Q5H8C1-1"/>
    <property type="protein sequence ID" value="ENSP00000370262.3"/>
    <property type="gene ID" value="ENSG00000164946.20"/>
</dbReference>
<dbReference type="Ensembl" id="ENST00000380894.5">
    <molecule id="Q5H8C1-2"/>
    <property type="protein sequence ID" value="ENSP00000370278.1"/>
    <property type="gene ID" value="ENSG00000164946.20"/>
</dbReference>
<dbReference type="Ensembl" id="ENST00000427623.5">
    <molecule id="Q5H8C1-4"/>
    <property type="protein sequence ID" value="ENSP00000412597.1"/>
    <property type="gene ID" value="ENSG00000164946.20"/>
</dbReference>
<dbReference type="GeneID" id="158326"/>
<dbReference type="KEGG" id="hsa:158326"/>
<dbReference type="MANE-Select" id="ENST00000380880.4">
    <property type="protein sequence ID" value="ENSP00000370262.3"/>
    <property type="RefSeq nucleotide sequence ID" value="NM_001379081.2"/>
    <property type="RefSeq protein sequence ID" value="NP_001366010.1"/>
</dbReference>
<dbReference type="UCSC" id="uc003zll.4">
    <molecule id="Q5H8C1-1"/>
    <property type="organism name" value="human"/>
</dbReference>
<dbReference type="AGR" id="HGNC:23399"/>
<dbReference type="CTD" id="158326"/>
<dbReference type="DisGeNET" id="158326"/>
<dbReference type="GeneCards" id="FREM1"/>
<dbReference type="GeneReviews" id="FREM1"/>
<dbReference type="HGNC" id="HGNC:23399">
    <property type="gene designation" value="FREM1"/>
</dbReference>
<dbReference type="HPA" id="ENSG00000164946">
    <property type="expression patterns" value="Tissue enhanced (epididymis)"/>
</dbReference>
<dbReference type="MalaCards" id="FREM1"/>
<dbReference type="MIM" id="248450">
    <property type="type" value="phenotype"/>
</dbReference>
<dbReference type="MIM" id="608944">
    <property type="type" value="gene"/>
</dbReference>
<dbReference type="MIM" id="608980">
    <property type="type" value="phenotype"/>
</dbReference>
<dbReference type="MIM" id="614485">
    <property type="type" value="phenotype"/>
</dbReference>
<dbReference type="neXtProt" id="NX_Q5H8C1"/>
<dbReference type="OpenTargets" id="ENSG00000164946"/>
<dbReference type="Orphanet" id="217266">
    <property type="disease" value="BNAR syndrome"/>
</dbReference>
<dbReference type="Orphanet" id="3366">
    <property type="disease" value="Non-syndromic metopic craniosynostosis"/>
</dbReference>
<dbReference type="Orphanet" id="2717">
    <property type="disease" value="Oculotrichoanal syndrome"/>
</dbReference>
<dbReference type="Orphanet" id="93100">
    <property type="disease" value="Renal agenesis, unilateral"/>
</dbReference>
<dbReference type="PharmGKB" id="PA134892147"/>
<dbReference type="VEuPathDB" id="HostDB:ENSG00000164946"/>
<dbReference type="eggNOG" id="KOG3597">
    <property type="taxonomic scope" value="Eukaryota"/>
</dbReference>
<dbReference type="GeneTree" id="ENSGT00940000156990"/>
<dbReference type="HOGENOM" id="CLU_001041_0_0_1"/>
<dbReference type="InParanoid" id="Q5H8C1"/>
<dbReference type="OMA" id="DIGPHLQ"/>
<dbReference type="OrthoDB" id="430044at2759"/>
<dbReference type="PAN-GO" id="Q5H8C1">
    <property type="GO annotations" value="2 GO annotations based on evolutionary models"/>
</dbReference>
<dbReference type="PhylomeDB" id="Q5H8C1"/>
<dbReference type="TreeFam" id="TF316876"/>
<dbReference type="PathwayCommons" id="Q5H8C1"/>
<dbReference type="SignaLink" id="Q5H8C1"/>
<dbReference type="SIGNOR" id="Q5H8C1"/>
<dbReference type="BioGRID-ORCS" id="158326">
    <property type="hits" value="15 hits in 1147 CRISPR screens"/>
</dbReference>
<dbReference type="ChiTaRS" id="FREM1">
    <property type="organism name" value="human"/>
</dbReference>
<dbReference type="GeneWiki" id="FREM1"/>
<dbReference type="GenomeRNAi" id="158326"/>
<dbReference type="Pharos" id="Q5H8C1">
    <property type="development level" value="Tbio"/>
</dbReference>
<dbReference type="PRO" id="PR:Q5H8C1"/>
<dbReference type="Proteomes" id="UP000005640">
    <property type="component" value="Chromosome 9"/>
</dbReference>
<dbReference type="RNAct" id="Q5H8C1">
    <property type="molecule type" value="protein"/>
</dbReference>
<dbReference type="Bgee" id="ENSG00000164946">
    <property type="expression patterns" value="Expressed in smooth muscle tissue and 116 other cell types or tissues"/>
</dbReference>
<dbReference type="ExpressionAtlas" id="Q5H8C1">
    <property type="expression patterns" value="baseline and differential"/>
</dbReference>
<dbReference type="GO" id="GO:0005604">
    <property type="term" value="C:basement membrane"/>
    <property type="evidence" value="ECO:0007669"/>
    <property type="project" value="UniProtKB-SubCell"/>
</dbReference>
<dbReference type="GO" id="GO:0062023">
    <property type="term" value="C:collagen-containing extracellular matrix"/>
    <property type="evidence" value="ECO:0000318"/>
    <property type="project" value="GO_Central"/>
</dbReference>
<dbReference type="GO" id="GO:0005576">
    <property type="term" value="C:extracellular region"/>
    <property type="evidence" value="ECO:0007669"/>
    <property type="project" value="UniProtKB-KW"/>
</dbReference>
<dbReference type="GO" id="GO:0016020">
    <property type="term" value="C:membrane"/>
    <property type="evidence" value="ECO:0007669"/>
    <property type="project" value="InterPro"/>
</dbReference>
<dbReference type="GO" id="GO:0030246">
    <property type="term" value="F:carbohydrate binding"/>
    <property type="evidence" value="ECO:0007669"/>
    <property type="project" value="UniProtKB-KW"/>
</dbReference>
<dbReference type="GO" id="GO:0046872">
    <property type="term" value="F:metal ion binding"/>
    <property type="evidence" value="ECO:0007669"/>
    <property type="project" value="UniProtKB-KW"/>
</dbReference>
<dbReference type="GO" id="GO:0009653">
    <property type="term" value="P:anatomical structure morphogenesis"/>
    <property type="evidence" value="ECO:0000318"/>
    <property type="project" value="GO_Central"/>
</dbReference>
<dbReference type="GO" id="GO:0007154">
    <property type="term" value="P:cell communication"/>
    <property type="evidence" value="ECO:0007669"/>
    <property type="project" value="InterPro"/>
</dbReference>
<dbReference type="GO" id="GO:0007160">
    <property type="term" value="P:cell-matrix adhesion"/>
    <property type="evidence" value="ECO:0007669"/>
    <property type="project" value="Ensembl"/>
</dbReference>
<dbReference type="GO" id="GO:0097094">
    <property type="term" value="P:craniofacial suture morphogenesis"/>
    <property type="evidence" value="ECO:0000315"/>
    <property type="project" value="UniProtKB"/>
</dbReference>
<dbReference type="CDD" id="cd00037">
    <property type="entry name" value="CLECT"/>
    <property type="match status" value="1"/>
</dbReference>
<dbReference type="FunFam" id="3.10.100.10:FF:000081">
    <property type="entry name" value="FRAS1 related extracellular matrix 1"/>
    <property type="match status" value="1"/>
</dbReference>
<dbReference type="FunFam" id="2.60.40.2030:FF:000015">
    <property type="entry name" value="FRAS1-related extracellular matrix protein 1"/>
    <property type="match status" value="1"/>
</dbReference>
<dbReference type="Gene3D" id="2.60.40.2030">
    <property type="match status" value="1"/>
</dbReference>
<dbReference type="Gene3D" id="3.10.100.10">
    <property type="entry name" value="Mannose-Binding Protein A, subunit A"/>
    <property type="match status" value="1"/>
</dbReference>
<dbReference type="InterPro" id="IPR001304">
    <property type="entry name" value="C-type_lectin-like"/>
</dbReference>
<dbReference type="InterPro" id="IPR016186">
    <property type="entry name" value="C-type_lectin-like/link_sf"/>
</dbReference>
<dbReference type="InterPro" id="IPR038081">
    <property type="entry name" value="CalX-like_sf"/>
</dbReference>
<dbReference type="InterPro" id="IPR003644">
    <property type="entry name" value="Calx_beta"/>
</dbReference>
<dbReference type="InterPro" id="IPR039005">
    <property type="entry name" value="CSPG_rpt"/>
</dbReference>
<dbReference type="InterPro" id="IPR016187">
    <property type="entry name" value="CTDL_fold"/>
</dbReference>
<dbReference type="InterPro" id="IPR045658">
    <property type="entry name" value="FRAS1-rel_N"/>
</dbReference>
<dbReference type="InterPro" id="IPR051561">
    <property type="entry name" value="FRAS1_ECM"/>
</dbReference>
<dbReference type="PANTHER" id="PTHR45739:SF7">
    <property type="entry name" value="FRAS1-RELATED EXTRACELLULAR MATRIX PROTEIN 1"/>
    <property type="match status" value="1"/>
</dbReference>
<dbReference type="PANTHER" id="PTHR45739">
    <property type="entry name" value="MATRIX PROTEIN, PUTATIVE-RELATED"/>
    <property type="match status" value="1"/>
</dbReference>
<dbReference type="Pfam" id="PF16184">
    <property type="entry name" value="Cadherin_3"/>
    <property type="match status" value="11"/>
</dbReference>
<dbReference type="Pfam" id="PF03160">
    <property type="entry name" value="Calx-beta"/>
    <property type="match status" value="1"/>
</dbReference>
<dbReference type="Pfam" id="PF19309">
    <property type="entry name" value="Frem_N"/>
    <property type="match status" value="1"/>
</dbReference>
<dbReference type="Pfam" id="PF00059">
    <property type="entry name" value="Lectin_C"/>
    <property type="match status" value="1"/>
</dbReference>
<dbReference type="SMART" id="SM00034">
    <property type="entry name" value="CLECT"/>
    <property type="match status" value="1"/>
</dbReference>
<dbReference type="SUPFAM" id="SSF56436">
    <property type="entry name" value="C-type lectin-like"/>
    <property type="match status" value="1"/>
</dbReference>
<dbReference type="SUPFAM" id="SSF141072">
    <property type="entry name" value="CalX-like"/>
    <property type="match status" value="1"/>
</dbReference>
<dbReference type="PROSITE" id="PS50041">
    <property type="entry name" value="C_TYPE_LECTIN_2"/>
    <property type="match status" value="1"/>
</dbReference>
<dbReference type="PROSITE" id="PS51854">
    <property type="entry name" value="CSPG"/>
    <property type="match status" value="12"/>
</dbReference>